<dbReference type="EC" id="6.3.2.1" evidence="1"/>
<dbReference type="EC" id="2.7.4.25" evidence="1"/>
<dbReference type="EMBL" id="AE017126">
    <property type="protein sequence ID" value="AAQ00790.1"/>
    <property type="molecule type" value="Genomic_DNA"/>
</dbReference>
<dbReference type="RefSeq" id="NP_876137.1">
    <property type="nucleotide sequence ID" value="NC_005042.1"/>
</dbReference>
<dbReference type="RefSeq" id="WP_011125895.1">
    <property type="nucleotide sequence ID" value="NC_005042.1"/>
</dbReference>
<dbReference type="SMR" id="Q7V9S8"/>
<dbReference type="STRING" id="167539.Pro_1746"/>
<dbReference type="EnsemblBacteria" id="AAQ00790">
    <property type="protein sequence ID" value="AAQ00790"/>
    <property type="gene ID" value="Pro_1746"/>
</dbReference>
<dbReference type="KEGG" id="pma:Pro_1746"/>
<dbReference type="PATRIC" id="fig|167539.5.peg.1844"/>
<dbReference type="eggNOG" id="COG0283">
    <property type="taxonomic scope" value="Bacteria"/>
</dbReference>
<dbReference type="eggNOG" id="COG0414">
    <property type="taxonomic scope" value="Bacteria"/>
</dbReference>
<dbReference type="HOGENOM" id="CLU_037427_0_0_3"/>
<dbReference type="OrthoDB" id="9773087at2"/>
<dbReference type="UniPathway" id="UPA00028">
    <property type="reaction ID" value="UER00005"/>
</dbReference>
<dbReference type="Proteomes" id="UP000001420">
    <property type="component" value="Chromosome"/>
</dbReference>
<dbReference type="GO" id="GO:0005829">
    <property type="term" value="C:cytosol"/>
    <property type="evidence" value="ECO:0007669"/>
    <property type="project" value="TreeGrafter"/>
</dbReference>
<dbReference type="GO" id="GO:0005524">
    <property type="term" value="F:ATP binding"/>
    <property type="evidence" value="ECO:0007669"/>
    <property type="project" value="UniProtKB-UniRule"/>
</dbReference>
<dbReference type="GO" id="GO:0036430">
    <property type="term" value="F:CMP kinase activity"/>
    <property type="evidence" value="ECO:0007669"/>
    <property type="project" value="RHEA"/>
</dbReference>
<dbReference type="GO" id="GO:0036431">
    <property type="term" value="F:dCMP kinase activity"/>
    <property type="evidence" value="ECO:0007669"/>
    <property type="project" value="RHEA"/>
</dbReference>
<dbReference type="GO" id="GO:0004592">
    <property type="term" value="F:pantoate-beta-alanine ligase activity"/>
    <property type="evidence" value="ECO:0007669"/>
    <property type="project" value="UniProtKB-UniRule"/>
</dbReference>
<dbReference type="GO" id="GO:0015949">
    <property type="term" value="P:nucleobase-containing small molecule interconversion"/>
    <property type="evidence" value="ECO:0007669"/>
    <property type="project" value="TreeGrafter"/>
</dbReference>
<dbReference type="GO" id="GO:0015940">
    <property type="term" value="P:pantothenate biosynthetic process"/>
    <property type="evidence" value="ECO:0007669"/>
    <property type="project" value="UniProtKB-UniRule"/>
</dbReference>
<dbReference type="GO" id="GO:0006220">
    <property type="term" value="P:pyrimidine nucleotide metabolic process"/>
    <property type="evidence" value="ECO:0007669"/>
    <property type="project" value="UniProtKB-UniRule"/>
</dbReference>
<dbReference type="CDD" id="cd02020">
    <property type="entry name" value="CMPK"/>
    <property type="match status" value="1"/>
</dbReference>
<dbReference type="CDD" id="cd00560">
    <property type="entry name" value="PanC"/>
    <property type="match status" value="1"/>
</dbReference>
<dbReference type="Gene3D" id="3.40.50.620">
    <property type="entry name" value="HUPs"/>
    <property type="match status" value="1"/>
</dbReference>
<dbReference type="Gene3D" id="3.40.50.300">
    <property type="entry name" value="P-loop containing nucleotide triphosphate hydrolases"/>
    <property type="match status" value="1"/>
</dbReference>
<dbReference type="Gene3D" id="3.30.1300.10">
    <property type="entry name" value="Pantoate-beta-alanine ligase, C-terminal domain"/>
    <property type="match status" value="1"/>
</dbReference>
<dbReference type="HAMAP" id="MF_00238">
    <property type="entry name" value="Cytidyl_kinase_type1"/>
    <property type="match status" value="1"/>
</dbReference>
<dbReference type="HAMAP" id="MF_00158">
    <property type="entry name" value="PanC"/>
    <property type="match status" value="1"/>
</dbReference>
<dbReference type="HAMAP" id="MF_01349">
    <property type="entry name" value="PanCY"/>
    <property type="match status" value="1"/>
</dbReference>
<dbReference type="InterPro" id="IPR003136">
    <property type="entry name" value="Cytidylate_kin"/>
</dbReference>
<dbReference type="InterPro" id="IPR011994">
    <property type="entry name" value="Cytidylate_kinase_dom"/>
</dbReference>
<dbReference type="InterPro" id="IPR027417">
    <property type="entry name" value="P-loop_NTPase"/>
</dbReference>
<dbReference type="InterPro" id="IPR003721">
    <property type="entry name" value="Pantoate_ligase"/>
</dbReference>
<dbReference type="InterPro" id="IPR024894">
    <property type="entry name" value="Pantoate_ligase/cytidylate_kin"/>
</dbReference>
<dbReference type="InterPro" id="IPR042176">
    <property type="entry name" value="Pantoate_ligase_C"/>
</dbReference>
<dbReference type="InterPro" id="IPR014729">
    <property type="entry name" value="Rossmann-like_a/b/a_fold"/>
</dbReference>
<dbReference type="NCBIfam" id="TIGR00017">
    <property type="entry name" value="cmk"/>
    <property type="match status" value="1"/>
</dbReference>
<dbReference type="NCBIfam" id="TIGR00018">
    <property type="entry name" value="panC"/>
    <property type="match status" value="1"/>
</dbReference>
<dbReference type="NCBIfam" id="NF010004">
    <property type="entry name" value="PRK13477.1"/>
    <property type="match status" value="1"/>
</dbReference>
<dbReference type="PANTHER" id="PTHR21299:SF2">
    <property type="entry name" value="CYTIDYLATE KINASE"/>
    <property type="match status" value="1"/>
</dbReference>
<dbReference type="PANTHER" id="PTHR21299">
    <property type="entry name" value="CYTIDYLATE KINASE/PANTOATE-BETA-ALANINE LIGASE"/>
    <property type="match status" value="1"/>
</dbReference>
<dbReference type="Pfam" id="PF02224">
    <property type="entry name" value="Cytidylate_kin"/>
    <property type="match status" value="1"/>
</dbReference>
<dbReference type="Pfam" id="PF02569">
    <property type="entry name" value="Pantoate_ligase"/>
    <property type="match status" value="1"/>
</dbReference>
<dbReference type="SUPFAM" id="SSF52374">
    <property type="entry name" value="Nucleotidylyl transferase"/>
    <property type="match status" value="1"/>
</dbReference>
<dbReference type="SUPFAM" id="SSF52540">
    <property type="entry name" value="P-loop containing nucleoside triphosphate hydrolases"/>
    <property type="match status" value="1"/>
</dbReference>
<gene>
    <name evidence="1" type="primary">panC/cmk</name>
    <name type="ordered locus">Pro_1746</name>
</gene>
<reference key="1">
    <citation type="journal article" date="2003" name="Proc. Natl. Acad. Sci. U.S.A.">
        <title>Genome sequence of the cyanobacterium Prochlorococcus marinus SS120, a nearly minimal oxyphototrophic genome.</title>
        <authorList>
            <person name="Dufresne A."/>
            <person name="Salanoubat M."/>
            <person name="Partensky F."/>
            <person name="Artiguenave F."/>
            <person name="Axmann I.M."/>
            <person name="Barbe V."/>
            <person name="Duprat S."/>
            <person name="Galperin M.Y."/>
            <person name="Koonin E.V."/>
            <person name="Le Gall F."/>
            <person name="Makarova K.S."/>
            <person name="Ostrowski M."/>
            <person name="Oztas S."/>
            <person name="Robert C."/>
            <person name="Rogozin I.B."/>
            <person name="Scanlan D.J."/>
            <person name="Tandeau de Marsac N."/>
            <person name="Weissenbach J."/>
            <person name="Wincker P."/>
            <person name="Wolf Y.I."/>
            <person name="Hess W.R."/>
        </authorList>
    </citation>
    <scope>NUCLEOTIDE SEQUENCE [LARGE SCALE GENOMIC DNA]</scope>
    <source>
        <strain>SARG / CCMP1375 / SS120</strain>
    </source>
</reference>
<comment type="function">
    <text evidence="1">Catalyzes the condensation of pantoate with beta-alanine in an ATP-dependent reaction via a pantoyl-adenylate intermediate.</text>
</comment>
<comment type="function">
    <text evidence="1">Catalyzes the transfer of a phosphate group from ATP to either CMP or dCMP to form CDP or dCDP and ADP, respectively.</text>
</comment>
<comment type="catalytic activity">
    <reaction evidence="1">
        <text>(R)-pantoate + beta-alanine + ATP = (R)-pantothenate + AMP + diphosphate + H(+)</text>
        <dbReference type="Rhea" id="RHEA:10912"/>
        <dbReference type="ChEBI" id="CHEBI:15378"/>
        <dbReference type="ChEBI" id="CHEBI:15980"/>
        <dbReference type="ChEBI" id="CHEBI:29032"/>
        <dbReference type="ChEBI" id="CHEBI:30616"/>
        <dbReference type="ChEBI" id="CHEBI:33019"/>
        <dbReference type="ChEBI" id="CHEBI:57966"/>
        <dbReference type="ChEBI" id="CHEBI:456215"/>
        <dbReference type="EC" id="6.3.2.1"/>
    </reaction>
</comment>
<comment type="catalytic activity">
    <reaction evidence="1">
        <text>CMP + ATP = CDP + ADP</text>
        <dbReference type="Rhea" id="RHEA:11600"/>
        <dbReference type="ChEBI" id="CHEBI:30616"/>
        <dbReference type="ChEBI" id="CHEBI:58069"/>
        <dbReference type="ChEBI" id="CHEBI:60377"/>
        <dbReference type="ChEBI" id="CHEBI:456216"/>
        <dbReference type="EC" id="2.7.4.25"/>
    </reaction>
</comment>
<comment type="catalytic activity">
    <reaction evidence="1">
        <text>dCMP + ATP = dCDP + ADP</text>
        <dbReference type="Rhea" id="RHEA:25094"/>
        <dbReference type="ChEBI" id="CHEBI:30616"/>
        <dbReference type="ChEBI" id="CHEBI:57566"/>
        <dbReference type="ChEBI" id="CHEBI:58593"/>
        <dbReference type="ChEBI" id="CHEBI:456216"/>
        <dbReference type="EC" id="2.7.4.25"/>
    </reaction>
</comment>
<comment type="pathway">
    <text evidence="1">Cofactor biosynthesis; (R)-pantothenate biosynthesis; (R)-pantothenate from (R)-pantoate and beta-alanine: step 1/1.</text>
</comment>
<comment type="subcellular location">
    <subcellularLocation>
        <location evidence="1">Cytoplasm</location>
    </subcellularLocation>
</comment>
<comment type="similarity">
    <text evidence="1">In the N-terminal section; belongs to the pantothenate synthetase family.</text>
</comment>
<comment type="similarity">
    <text evidence="1">In the C-terminal section; belongs to the cytidylate kinase family. Type 1 subfamily.</text>
</comment>
<evidence type="ECO:0000255" key="1">
    <source>
        <dbReference type="HAMAP-Rule" id="MF_01349"/>
    </source>
</evidence>
<protein>
    <recommendedName>
        <fullName evidence="1">Bifunctional pantoate ligase/cytidylate kinase</fullName>
    </recommendedName>
    <domain>
        <recommendedName>
            <fullName evidence="1">Pantothenate synthetase</fullName>
            <shortName evidence="1">PS</shortName>
            <ecNumber evidence="1">6.3.2.1</ecNumber>
        </recommendedName>
        <alternativeName>
            <fullName evidence="1">Pantoate--beta-alanine ligase</fullName>
        </alternativeName>
        <alternativeName>
            <fullName evidence="1">Pantoate-activating enzyme</fullName>
        </alternativeName>
    </domain>
    <domain>
        <recommendedName>
            <fullName evidence="1">Cytidylate kinase</fullName>
            <shortName evidence="1">CK</shortName>
            <ecNumber evidence="1">2.7.4.25</ecNumber>
        </recommendedName>
        <alternativeName>
            <fullName evidence="1">Cytidine monophosphate kinase</fullName>
            <shortName evidence="1">CMP kinase</shortName>
        </alternativeName>
    </domain>
</protein>
<name>PANCY_PROMA</name>
<organism>
    <name type="scientific">Prochlorococcus marinus (strain SARG / CCMP1375 / SS120)</name>
    <dbReference type="NCBI Taxonomy" id="167539"/>
    <lineage>
        <taxon>Bacteria</taxon>
        <taxon>Bacillati</taxon>
        <taxon>Cyanobacteriota</taxon>
        <taxon>Cyanophyceae</taxon>
        <taxon>Synechococcales</taxon>
        <taxon>Prochlorococcaceae</taxon>
        <taxon>Prochlorococcus</taxon>
    </lineage>
</organism>
<feature type="chain" id="PRO_0000239790" description="Bifunctional pantoate ligase/cytidylate kinase">
    <location>
        <begin position="1"/>
        <end position="519"/>
    </location>
</feature>
<feature type="region of interest" description="Pantoate--beta-alanine ligase" evidence="1">
    <location>
        <begin position="1"/>
        <end position="282"/>
    </location>
</feature>
<feature type="region of interest" description="Cytidylate kinase" evidence="1">
    <location>
        <begin position="283"/>
        <end position="519"/>
    </location>
</feature>
<feature type="active site" description="Proton donor" evidence="1">
    <location>
        <position position="37"/>
    </location>
</feature>
<feature type="binding site" evidence="1">
    <location>
        <begin position="30"/>
        <end position="37"/>
    </location>
    <ligand>
        <name>ATP</name>
        <dbReference type="ChEBI" id="CHEBI:30616"/>
    </ligand>
</feature>
<feature type="binding site" evidence="1">
    <location>
        <position position="66"/>
    </location>
    <ligand>
        <name>(R)-pantoate</name>
        <dbReference type="ChEBI" id="CHEBI:15980"/>
    </ligand>
</feature>
<feature type="binding site" evidence="1">
    <location>
        <position position="66"/>
    </location>
    <ligand>
        <name>beta-alanine</name>
        <dbReference type="ChEBI" id="CHEBI:57966"/>
    </ligand>
</feature>
<feature type="binding site" evidence="1">
    <location>
        <begin position="155"/>
        <end position="158"/>
    </location>
    <ligand>
        <name>ATP</name>
        <dbReference type="ChEBI" id="CHEBI:30616"/>
    </ligand>
</feature>
<feature type="binding site" evidence="1">
    <location>
        <position position="161"/>
    </location>
    <ligand>
        <name>(R)-pantoate</name>
        <dbReference type="ChEBI" id="CHEBI:15980"/>
    </ligand>
</feature>
<feature type="binding site" evidence="1">
    <location>
        <begin position="192"/>
        <end position="195"/>
    </location>
    <ligand>
        <name>ATP</name>
        <dbReference type="ChEBI" id="CHEBI:30616"/>
    </ligand>
</feature>
<proteinExistence type="inferred from homology"/>
<accession>Q7V9S8</accession>
<keyword id="KW-0067">ATP-binding</keyword>
<keyword id="KW-0963">Cytoplasm</keyword>
<keyword id="KW-0418">Kinase</keyword>
<keyword id="KW-0436">Ligase</keyword>
<keyword id="KW-0511">Multifunctional enzyme</keyword>
<keyword id="KW-0547">Nucleotide-binding</keyword>
<keyword id="KW-0566">Pantothenate biosynthesis</keyword>
<keyword id="KW-1185">Reference proteome</keyword>
<keyword id="KW-0808">Transferase</keyword>
<sequence length="519" mass="58064">MNLTILRTKTALEDWCRQKHNHEINFVPTMGGLHQGHQELIKTARSFCKRKHSSQVLVSIFINPLQFDLEEDFKKYPRTFENDCKIAYEAGANAIWAPSFESVFPNGEEAHFKIQVPFSLNKYLCGASREGHFDGVATVVVRLLALVRPNRIFLGEKDWQQLVILRQLINDLGLPVLIHSIPTKRDQDGLPCSSRNVNLSKEERKKVVALPAVLQQAAQAFQENKPINLNNMKTTLEEHDLKVEYLETVDLKNLNPVNHDESKLCLLAAAVHCGNTRLIDHGFLMKRNPIVAIDGPAGAGKSTVTKKFAQKLGLIYLDTGAMYRAVTWLIQENNIDPQNSSELELILNDINLDICLSNTGNQQVLINGKDITTLIRSPTVTSQVSLVAAIGSVREKLTSQQKELGSKGGLVAEGRDIGTAVFPDAELKIFLTATAQERAKRRAIDLKKQGFSTPSLSELEKQIKERDRLDSSREIAPLSKAKDAQELITDGMNIEEVVELLINIFREKIPQEVWPTNAT</sequence>